<accession>Q5ZKG3</accession>
<accession>F1NWZ9</accession>
<name>DNA2_CHICK</name>
<reference key="1">
    <citation type="journal article" date="2005" name="Genome Biol.">
        <title>Full-length cDNAs from chicken bursal lymphocytes to facilitate gene function analysis.</title>
        <authorList>
            <person name="Caldwell R.B."/>
            <person name="Kierzek A.M."/>
            <person name="Arakawa H."/>
            <person name="Bezzubov Y."/>
            <person name="Zaim J."/>
            <person name="Fiedler P."/>
            <person name="Kutter S."/>
            <person name="Blagodatski A."/>
            <person name="Kostovska D."/>
            <person name="Koter M."/>
            <person name="Plachy J."/>
            <person name="Carninci P."/>
            <person name="Hayashizaki Y."/>
            <person name="Buerstedde J.-M."/>
        </authorList>
    </citation>
    <scope>NUCLEOTIDE SEQUENCE [LARGE SCALE MRNA]</scope>
    <source>
        <strain>CB</strain>
        <tissue>Bursa of Fabricius</tissue>
    </source>
</reference>
<reference key="2">
    <citation type="journal article" date="2004" name="Nature">
        <title>Sequence and comparative analysis of the chicken genome provide unique perspectives on vertebrate evolution.</title>
        <authorList>
            <person name="Hillier L.W."/>
            <person name="Miller W."/>
            <person name="Birney E."/>
            <person name="Warren W."/>
            <person name="Hardison R.C."/>
            <person name="Ponting C.P."/>
            <person name="Bork P."/>
            <person name="Burt D.W."/>
            <person name="Groenen M.A.M."/>
            <person name="Delany M.E."/>
            <person name="Dodgson J.B."/>
            <person name="Chinwalla A.T."/>
            <person name="Cliften P.F."/>
            <person name="Clifton S.W."/>
            <person name="Delehaunty K.D."/>
            <person name="Fronick C."/>
            <person name="Fulton R.S."/>
            <person name="Graves T.A."/>
            <person name="Kremitzki C."/>
            <person name="Layman D."/>
            <person name="Magrini V."/>
            <person name="McPherson J.D."/>
            <person name="Miner T.L."/>
            <person name="Minx P."/>
            <person name="Nash W.E."/>
            <person name="Nhan M.N."/>
            <person name="Nelson J.O."/>
            <person name="Oddy L.G."/>
            <person name="Pohl C.S."/>
            <person name="Randall-Maher J."/>
            <person name="Smith S.M."/>
            <person name="Wallis J.W."/>
            <person name="Yang S.-P."/>
            <person name="Romanov M.N."/>
            <person name="Rondelli C.M."/>
            <person name="Paton B."/>
            <person name="Smith J."/>
            <person name="Morrice D."/>
            <person name="Daniels L."/>
            <person name="Tempest H.G."/>
            <person name="Robertson L."/>
            <person name="Masabanda J.S."/>
            <person name="Griffin D.K."/>
            <person name="Vignal A."/>
            <person name="Fillon V."/>
            <person name="Jacobbson L."/>
            <person name="Kerje S."/>
            <person name="Andersson L."/>
            <person name="Crooijmans R.P."/>
            <person name="Aerts J."/>
            <person name="van der Poel J.J."/>
            <person name="Ellegren H."/>
            <person name="Caldwell R.B."/>
            <person name="Hubbard S.J."/>
            <person name="Grafham D.V."/>
            <person name="Kierzek A.M."/>
            <person name="McLaren S.R."/>
            <person name="Overton I.M."/>
            <person name="Arakawa H."/>
            <person name="Beattie K.J."/>
            <person name="Bezzubov Y."/>
            <person name="Boardman P.E."/>
            <person name="Bonfield J.K."/>
            <person name="Croning M.D.R."/>
            <person name="Davies R.M."/>
            <person name="Francis M.D."/>
            <person name="Humphray S.J."/>
            <person name="Scott C.E."/>
            <person name="Taylor R.G."/>
            <person name="Tickle C."/>
            <person name="Brown W.R.A."/>
            <person name="Rogers J."/>
            <person name="Buerstedde J.-M."/>
            <person name="Wilson S.A."/>
            <person name="Stubbs L."/>
            <person name="Ovcharenko I."/>
            <person name="Gordon L."/>
            <person name="Lucas S."/>
            <person name="Miller M.M."/>
            <person name="Inoko H."/>
            <person name="Shiina T."/>
            <person name="Kaufman J."/>
            <person name="Salomonsen J."/>
            <person name="Skjoedt K."/>
            <person name="Wong G.K.-S."/>
            <person name="Wang J."/>
            <person name="Liu B."/>
            <person name="Wang J."/>
            <person name="Yu J."/>
            <person name="Yang H."/>
            <person name="Nefedov M."/>
            <person name="Koriabine M."/>
            <person name="Dejong P.J."/>
            <person name="Goodstadt L."/>
            <person name="Webber C."/>
            <person name="Dickens N.J."/>
            <person name="Letunic I."/>
            <person name="Suyama M."/>
            <person name="Torrents D."/>
            <person name="von Mering C."/>
            <person name="Zdobnov E.M."/>
            <person name="Makova K."/>
            <person name="Nekrutenko A."/>
            <person name="Elnitski L."/>
            <person name="Eswara P."/>
            <person name="King D.C."/>
            <person name="Yang S.-P."/>
            <person name="Tyekucheva S."/>
            <person name="Radakrishnan A."/>
            <person name="Harris R.S."/>
            <person name="Chiaromonte F."/>
            <person name="Taylor J."/>
            <person name="He J."/>
            <person name="Rijnkels M."/>
            <person name="Griffiths-Jones S."/>
            <person name="Ureta-Vidal A."/>
            <person name="Hoffman M.M."/>
            <person name="Severin J."/>
            <person name="Searle S.M.J."/>
            <person name="Law A.S."/>
            <person name="Speed D."/>
            <person name="Waddington D."/>
            <person name="Cheng Z."/>
            <person name="Tuzun E."/>
            <person name="Eichler E."/>
            <person name="Bao Z."/>
            <person name="Flicek P."/>
            <person name="Shteynberg D.D."/>
            <person name="Brent M.R."/>
            <person name="Bye J.M."/>
            <person name="Huckle E.J."/>
            <person name="Chatterji S."/>
            <person name="Dewey C."/>
            <person name="Pachter L."/>
            <person name="Kouranov A."/>
            <person name="Mourelatos Z."/>
            <person name="Hatzigeorgiou A.G."/>
            <person name="Paterson A.H."/>
            <person name="Ivarie R."/>
            <person name="Brandstrom M."/>
            <person name="Axelsson E."/>
            <person name="Backstrom N."/>
            <person name="Berlin S."/>
            <person name="Webster M.T."/>
            <person name="Pourquie O."/>
            <person name="Reymond A."/>
            <person name="Ucla C."/>
            <person name="Antonarakis S.E."/>
            <person name="Long M."/>
            <person name="Emerson J.J."/>
            <person name="Betran E."/>
            <person name="Dupanloup I."/>
            <person name="Kaessmann H."/>
            <person name="Hinrichs A.S."/>
            <person name="Bejerano G."/>
            <person name="Furey T.S."/>
            <person name="Harte R.A."/>
            <person name="Raney B."/>
            <person name="Siepel A."/>
            <person name="Kent W.J."/>
            <person name="Haussler D."/>
            <person name="Eyras E."/>
            <person name="Castelo R."/>
            <person name="Abril J.F."/>
            <person name="Castellano S."/>
            <person name="Camara F."/>
            <person name="Parra G."/>
            <person name="Guigo R."/>
            <person name="Bourque G."/>
            <person name="Tesler G."/>
            <person name="Pevzner P.A."/>
            <person name="Smit A."/>
            <person name="Fulton L.A."/>
            <person name="Mardis E.R."/>
            <person name="Wilson R.K."/>
        </authorList>
    </citation>
    <scope>NUCLEOTIDE SEQUENCE [LARGE SCALE GENOMIC DNA]</scope>
    <source>
        <strain>Red jungle fowl</strain>
    </source>
</reference>
<feature type="chain" id="PRO_0000263605" description="DNA replication ATP-dependent helicase/nuclease DNA2">
    <location>
        <begin position="1"/>
        <end position="992"/>
    </location>
</feature>
<feature type="region of interest" description="Nuclease activity" evidence="1">
    <location>
        <begin position="51"/>
        <end position="488"/>
    </location>
</feature>
<feature type="region of interest" description="Helicase activity" evidence="1">
    <location>
        <begin position="489"/>
        <end position="992"/>
    </location>
</feature>
<feature type="binding site" evidence="1">
    <location>
        <position position="106"/>
    </location>
    <ligand>
        <name>[4Fe-4S] cluster</name>
        <dbReference type="ChEBI" id="CHEBI:49883"/>
    </ligand>
</feature>
<feature type="binding site" evidence="1">
    <location>
        <position position="362"/>
    </location>
    <ligand>
        <name>[4Fe-4S] cluster</name>
        <dbReference type="ChEBI" id="CHEBI:49883"/>
    </ligand>
</feature>
<feature type="binding site" evidence="1">
    <location>
        <position position="365"/>
    </location>
    <ligand>
        <name>[4Fe-4S] cluster</name>
        <dbReference type="ChEBI" id="CHEBI:49883"/>
    </ligand>
</feature>
<feature type="binding site" evidence="1">
    <location>
        <position position="371"/>
    </location>
    <ligand>
        <name>[4Fe-4S] cluster</name>
        <dbReference type="ChEBI" id="CHEBI:49883"/>
    </ligand>
</feature>
<feature type="binding site" evidence="3">
    <location>
        <begin position="617"/>
        <end position="624"/>
    </location>
    <ligand>
        <name>ATP</name>
        <dbReference type="ChEBI" id="CHEBI:30616"/>
    </ligand>
</feature>
<feature type="sequence conflict" description="In Ref. 1; CAG31780." evidence="4" ref="1">
    <original>S</original>
    <variation>T</variation>
    <location>
        <position position="578"/>
    </location>
</feature>
<feature type="sequence conflict" description="In Ref. 1; CAG31780." evidence="4" ref="1">
    <original>K</original>
    <variation>E</variation>
    <location>
        <position position="931"/>
    </location>
</feature>
<feature type="sequence conflict" description="In Ref. 1; CAG31780." evidence="4" ref="1">
    <original>P</original>
    <variation>A</variation>
    <location>
        <position position="980"/>
    </location>
</feature>
<dbReference type="EC" id="3.1.-.-"/>
<dbReference type="EC" id="3.6.4.12"/>
<dbReference type="EMBL" id="AJ720121">
    <property type="protein sequence ID" value="CAG31780.1"/>
    <property type="molecule type" value="mRNA"/>
</dbReference>
<dbReference type="EMBL" id="AADN02028013">
    <property type="status" value="NOT_ANNOTATED_CDS"/>
    <property type="molecule type" value="Genomic_DNA"/>
</dbReference>
<dbReference type="RefSeq" id="NP_001006497.1">
    <property type="nucleotide sequence ID" value="NM_001006497.1"/>
</dbReference>
<dbReference type="SMR" id="Q5ZKG3"/>
<dbReference type="FunCoup" id="Q5ZKG3">
    <property type="interactions" value="1736"/>
</dbReference>
<dbReference type="STRING" id="9031.ENSGALP00000006419"/>
<dbReference type="PaxDb" id="9031-ENSGALP00000006419"/>
<dbReference type="GeneID" id="423688"/>
<dbReference type="KEGG" id="gga:423688"/>
<dbReference type="CTD" id="1763"/>
<dbReference type="VEuPathDB" id="HostDB:geneid_423688"/>
<dbReference type="eggNOG" id="KOG1805">
    <property type="taxonomic scope" value="Eukaryota"/>
</dbReference>
<dbReference type="InParanoid" id="Q5ZKG3"/>
<dbReference type="OrthoDB" id="306218at2759"/>
<dbReference type="Reactome" id="R-GGA-5685938">
    <property type="pathway name" value="HDR through Single Strand Annealing (SSA)"/>
</dbReference>
<dbReference type="Reactome" id="R-GGA-5685942">
    <property type="pathway name" value="HDR through Homologous Recombination (HRR)"/>
</dbReference>
<dbReference type="Reactome" id="R-GGA-5693568">
    <property type="pathway name" value="Resolution of D-loop Structures through Holliday Junction Intermediates"/>
</dbReference>
<dbReference type="Reactome" id="R-GGA-5693579">
    <property type="pathway name" value="Homologous DNA Pairing and Strand Exchange"/>
</dbReference>
<dbReference type="Reactome" id="R-GGA-5693607">
    <property type="pathway name" value="Processing of DNA double-strand break ends"/>
</dbReference>
<dbReference type="Reactome" id="R-GGA-5693616">
    <property type="pathway name" value="Presynaptic phase of homologous DNA pairing and strand exchange"/>
</dbReference>
<dbReference type="PRO" id="PR:Q5ZKG3"/>
<dbReference type="Proteomes" id="UP000000539">
    <property type="component" value="Chromosome 6"/>
</dbReference>
<dbReference type="Bgee" id="ENSGALG00000004037">
    <property type="expression patterns" value="Expressed in spermatid and 8 other cell types or tissues"/>
</dbReference>
<dbReference type="GO" id="GO:0005737">
    <property type="term" value="C:cytoplasm"/>
    <property type="evidence" value="ECO:0000318"/>
    <property type="project" value="GO_Central"/>
</dbReference>
<dbReference type="GO" id="GO:0005739">
    <property type="term" value="C:mitochondrion"/>
    <property type="evidence" value="ECO:0007669"/>
    <property type="project" value="UniProtKB-SubCell"/>
</dbReference>
<dbReference type="GO" id="GO:0005634">
    <property type="term" value="C:nucleus"/>
    <property type="evidence" value="ECO:0007669"/>
    <property type="project" value="UniProtKB-SubCell"/>
</dbReference>
<dbReference type="GO" id="GO:0051539">
    <property type="term" value="F:4 iron, 4 sulfur cluster binding"/>
    <property type="evidence" value="ECO:0007669"/>
    <property type="project" value="UniProtKB-KW"/>
</dbReference>
<dbReference type="GO" id="GO:0043139">
    <property type="term" value="F:5'-3' DNA helicase activity"/>
    <property type="evidence" value="ECO:0000250"/>
    <property type="project" value="UniProtKB"/>
</dbReference>
<dbReference type="GO" id="GO:0017108">
    <property type="term" value="F:5'-flap endonuclease activity"/>
    <property type="evidence" value="ECO:0000250"/>
    <property type="project" value="UniProtKB"/>
</dbReference>
<dbReference type="GO" id="GO:0005524">
    <property type="term" value="F:ATP binding"/>
    <property type="evidence" value="ECO:0007669"/>
    <property type="project" value="UniProtKB-KW"/>
</dbReference>
<dbReference type="GO" id="GO:0016887">
    <property type="term" value="F:ATP hydrolysis activity"/>
    <property type="evidence" value="ECO:0000250"/>
    <property type="project" value="UniProtKB"/>
</dbReference>
<dbReference type="GO" id="GO:0003677">
    <property type="term" value="F:DNA binding"/>
    <property type="evidence" value="ECO:0000250"/>
    <property type="project" value="UniProtKB"/>
</dbReference>
<dbReference type="GO" id="GO:0046872">
    <property type="term" value="F:metal ion binding"/>
    <property type="evidence" value="ECO:0007669"/>
    <property type="project" value="UniProtKB-KW"/>
</dbReference>
<dbReference type="GO" id="GO:0004518">
    <property type="term" value="F:nuclease activity"/>
    <property type="evidence" value="ECO:0000250"/>
    <property type="project" value="UniProtKB"/>
</dbReference>
<dbReference type="GO" id="GO:0003723">
    <property type="term" value="F:RNA binding"/>
    <property type="evidence" value="ECO:0000318"/>
    <property type="project" value="GO_Central"/>
</dbReference>
<dbReference type="GO" id="GO:0017116">
    <property type="term" value="F:single-stranded DNA helicase activity"/>
    <property type="evidence" value="ECO:0000250"/>
    <property type="project" value="UniProtKB"/>
</dbReference>
<dbReference type="GO" id="GO:0016890">
    <property type="term" value="F:site-specific endodeoxyribonuclease activity, specific for altered base"/>
    <property type="evidence" value="ECO:0000250"/>
    <property type="project" value="UniProtKB"/>
</dbReference>
<dbReference type="GO" id="GO:0006284">
    <property type="term" value="P:base-excision repair"/>
    <property type="evidence" value="ECO:0000250"/>
    <property type="project" value="UniProtKB"/>
</dbReference>
<dbReference type="GO" id="GO:0000729">
    <property type="term" value="P:DNA double-strand break processing"/>
    <property type="evidence" value="ECO:0000250"/>
    <property type="project" value="UniProtKB"/>
</dbReference>
<dbReference type="GO" id="GO:0006260">
    <property type="term" value="P:DNA replication"/>
    <property type="evidence" value="ECO:0000250"/>
    <property type="project" value="UniProtKB"/>
</dbReference>
<dbReference type="GO" id="GO:0000076">
    <property type="term" value="P:DNA replication checkpoint signaling"/>
    <property type="evidence" value="ECO:0000250"/>
    <property type="project" value="UniProtKB"/>
</dbReference>
<dbReference type="GO" id="GO:0033567">
    <property type="term" value="P:DNA replication, Okazaki fragment processing"/>
    <property type="evidence" value="ECO:0000250"/>
    <property type="project" value="UniProtKB"/>
</dbReference>
<dbReference type="GO" id="GO:0043137">
    <property type="term" value="P:DNA replication, removal of RNA primer"/>
    <property type="evidence" value="ECO:0000250"/>
    <property type="project" value="UniProtKB"/>
</dbReference>
<dbReference type="GO" id="GO:0006264">
    <property type="term" value="P:mitochondrial DNA replication"/>
    <property type="evidence" value="ECO:0000250"/>
    <property type="project" value="UniProtKB"/>
</dbReference>
<dbReference type="GO" id="GO:0045740">
    <property type="term" value="P:positive regulation of DNA replication"/>
    <property type="evidence" value="ECO:0000250"/>
    <property type="project" value="UniProtKB"/>
</dbReference>
<dbReference type="GO" id="GO:0071932">
    <property type="term" value="P:replication fork reversal"/>
    <property type="evidence" value="ECO:0000318"/>
    <property type="project" value="GO_Central"/>
</dbReference>
<dbReference type="CDD" id="cd18041">
    <property type="entry name" value="DEXXQc_DNA2"/>
    <property type="match status" value="1"/>
</dbReference>
<dbReference type="CDD" id="cd22318">
    <property type="entry name" value="DNA2_N-like"/>
    <property type="match status" value="1"/>
</dbReference>
<dbReference type="CDD" id="cd18808">
    <property type="entry name" value="SF1_C_Upf1"/>
    <property type="match status" value="1"/>
</dbReference>
<dbReference type="FunFam" id="3.40.50.300:FF:000721">
    <property type="entry name" value="DNA replication ATP-dependent helicase/nuclease DNA2"/>
    <property type="match status" value="1"/>
</dbReference>
<dbReference type="FunFam" id="3.40.50.300:FF:003396">
    <property type="entry name" value="DNA replication ATP-dependent helicase/nuclease DNA2"/>
    <property type="match status" value="1"/>
</dbReference>
<dbReference type="FunFam" id="3.90.320.10:FF:000001">
    <property type="entry name" value="DNA replication helicase Dna2"/>
    <property type="match status" value="1"/>
</dbReference>
<dbReference type="FunFam" id="3.40.50.300:FF:001889">
    <property type="entry name" value="DNA replication helicase/nuclease 2"/>
    <property type="match status" value="1"/>
</dbReference>
<dbReference type="Gene3D" id="3.90.320.10">
    <property type="match status" value="1"/>
</dbReference>
<dbReference type="Gene3D" id="3.40.50.300">
    <property type="entry name" value="P-loop containing nucleotide triphosphate hydrolases"/>
    <property type="match status" value="2"/>
</dbReference>
<dbReference type="InterPro" id="IPR026851">
    <property type="entry name" value="Dna2/JHS1_DEXXQ-box"/>
</dbReference>
<dbReference type="InterPro" id="IPR045055">
    <property type="entry name" value="DNA2/NAM7-like"/>
</dbReference>
<dbReference type="InterPro" id="IPR041679">
    <property type="entry name" value="DNA2/NAM7-like_C"/>
</dbReference>
<dbReference type="InterPro" id="IPR041677">
    <property type="entry name" value="DNA2/NAM7_AAA_11"/>
</dbReference>
<dbReference type="InterPro" id="IPR048459">
    <property type="entry name" value="DNA2_Rift"/>
</dbReference>
<dbReference type="InterPro" id="IPR014808">
    <property type="entry name" value="DNA_replication_fac_Dna2_N"/>
</dbReference>
<dbReference type="InterPro" id="IPR027417">
    <property type="entry name" value="P-loop_NTPase"/>
</dbReference>
<dbReference type="InterPro" id="IPR011604">
    <property type="entry name" value="PDDEXK-like_dom_sf"/>
</dbReference>
<dbReference type="InterPro" id="IPR047187">
    <property type="entry name" value="SF1_C_Upf1"/>
</dbReference>
<dbReference type="PANTHER" id="PTHR10887:SF433">
    <property type="entry name" value="DNA REPLICATION ATP-DEPENDENT HELICASE_NUCLEASE DNA2"/>
    <property type="match status" value="1"/>
</dbReference>
<dbReference type="PANTHER" id="PTHR10887">
    <property type="entry name" value="DNA2/NAM7 HELICASE FAMILY"/>
    <property type="match status" value="1"/>
</dbReference>
<dbReference type="Pfam" id="PF13086">
    <property type="entry name" value="AAA_11"/>
    <property type="match status" value="2"/>
</dbReference>
<dbReference type="Pfam" id="PF13087">
    <property type="entry name" value="AAA_12"/>
    <property type="match status" value="2"/>
</dbReference>
<dbReference type="Pfam" id="PF08696">
    <property type="entry name" value="Dna2"/>
    <property type="match status" value="1"/>
</dbReference>
<dbReference type="Pfam" id="PF21123">
    <property type="entry name" value="Dna2_Rift"/>
    <property type="match status" value="1"/>
</dbReference>
<dbReference type="SUPFAM" id="SSF52540">
    <property type="entry name" value="P-loop containing nucleoside triphosphate hydrolases"/>
    <property type="match status" value="1"/>
</dbReference>
<keyword id="KW-0004">4Fe-4S</keyword>
<keyword id="KW-0067">ATP-binding</keyword>
<keyword id="KW-0227">DNA damage</keyword>
<keyword id="KW-0234">DNA repair</keyword>
<keyword id="KW-0235">DNA replication</keyword>
<keyword id="KW-0238">DNA-binding</keyword>
<keyword id="KW-0255">Endonuclease</keyword>
<keyword id="KW-0347">Helicase</keyword>
<keyword id="KW-0378">Hydrolase</keyword>
<keyword id="KW-0408">Iron</keyword>
<keyword id="KW-0411">Iron-sulfur</keyword>
<keyword id="KW-0479">Metal-binding</keyword>
<keyword id="KW-0496">Mitochondrion</keyword>
<keyword id="KW-0511">Multifunctional enzyme</keyword>
<keyword id="KW-0540">Nuclease</keyword>
<keyword id="KW-0547">Nucleotide-binding</keyword>
<keyword id="KW-0539">Nucleus</keyword>
<keyword id="KW-1185">Reference proteome</keyword>
<organism>
    <name type="scientific">Gallus gallus</name>
    <name type="common">Chicken</name>
    <dbReference type="NCBI Taxonomy" id="9031"/>
    <lineage>
        <taxon>Eukaryota</taxon>
        <taxon>Metazoa</taxon>
        <taxon>Chordata</taxon>
        <taxon>Craniata</taxon>
        <taxon>Vertebrata</taxon>
        <taxon>Euteleostomi</taxon>
        <taxon>Archelosauria</taxon>
        <taxon>Archosauria</taxon>
        <taxon>Dinosauria</taxon>
        <taxon>Saurischia</taxon>
        <taxon>Theropoda</taxon>
        <taxon>Coelurosauria</taxon>
        <taxon>Aves</taxon>
        <taxon>Neognathae</taxon>
        <taxon>Galloanserae</taxon>
        <taxon>Galliformes</taxon>
        <taxon>Phasianidae</taxon>
        <taxon>Phasianinae</taxon>
        <taxon>Gallus</taxon>
    </lineage>
</organism>
<evidence type="ECO:0000250" key="1"/>
<evidence type="ECO:0000250" key="2">
    <source>
        <dbReference type="UniProtKB" id="P51530"/>
    </source>
</evidence>
<evidence type="ECO:0000255" key="3"/>
<evidence type="ECO:0000305" key="4"/>
<sequence length="992" mass="111679">MADPSNAALRSGLNNRYRVLEVRVVRGEGRDPEKHLAVSSDPSLGDTELCVLQNGWESVPVVPGDIVHLEGDCSSGTWVINEQSGYLILYPDLLLSGTTISSSIRCMRKAVLSERFRGSECGSRQTLVGTILHEIFQQSVTNNLSPEKVEELAKKIVYGQKYLKEMYHLKLKQTEIMQEIEEYLPSFFKWTEDFVRNPANQNKMQLKLPSENKTGDCSSTVEIVDILDIEENIWSPRFGLKGKIDVTARVKIHRQGGIQSRIMPLELKSGKESNSVEHRSQVILYTLLNLERRVDPEAGFLLYLKTGTMYPVTGTRMDRRELIKLRNQVAFYLMHSTYKSAVGRQQSQLAALPPLIDDSQACKYCSQIHNCFLYSRAVEERMASVSFPPALIPIIEKETQHLKPSHLEYFSLWYLMLTLEMQSGDSKKGYKNIWMIPSLEREKAGDCVGNMIRVDQVQEVSEGQYLHSFQRKNGAVPGANLLVGDRVVVSGEENGLLGLATGYVREISATKISCLLGRNLSKLPESTTFRLDHEEGDCSIGVPFENLSKLMKDSPVSEKLRNLIIDFHKPRFIQHLSSVLPPEAKEAVASILKGLNKPQKQAMKQVLLSRDYTLIVGMPGTGKTTTICALVRILSACGFSVLLTSFTHTAVDNILLKLAKFKVGFLRLGRAQKVHPDIRKFTEEEICRSKSIKSVTDLEELYNSQPVVATACMGINHPIFVQKQFDFCIVDEASQISQPICLGPLFCSKRFVLVGDHQQLPPLVQNSEARDLGMSESLFKRLEQNQNAVVQLTVQYRMNSKIMSLSNKLVYEGKLECGSEKVSNATANLPNLKMLKLEFADASKTWLKEVLEPDKPVCFLNTEKAGCRPSDIGIISPYRHQLKVITDLMARLKENRVEVNTIDKYQGRDKSIIIVSFVRNSNDENLGALLKDWRRLNVAITRAKHKLIMVGCVPSLRRYPPLEKLLCHLQSEAMIFNLPPGAHESIHKCNIL</sequence>
<protein>
    <recommendedName>
        <fullName>DNA replication ATP-dependent helicase/nuclease DNA2</fullName>
    </recommendedName>
    <alternativeName>
        <fullName>DNA replication ATP-dependent helicase-like homolog</fullName>
    </alternativeName>
    <domain>
        <recommendedName>
            <fullName>DNA replication nuclease DNA2</fullName>
            <ecNumber>3.1.-.-</ecNumber>
        </recommendedName>
    </domain>
    <domain>
        <recommendedName>
            <fullName>DNA replication ATP-dependent helicase DNA2</fullName>
            <ecNumber>3.6.4.12</ecNumber>
        </recommendedName>
    </domain>
</protein>
<proteinExistence type="evidence at transcript level"/>
<comment type="function">
    <text evidence="2">Key enzyme involved in DNA replication and DNA repair in nucleus and mitochondrion. Involved in Okazaki fragments processing by cleaving long flaps that escape FEN1: flaps that are longer than 27 nucleotides are coated by replication protein A complex (RPA), leading to recruit DNA2 which cleaves the flap until it is too short to bind RPA and becomes a substrate for FEN1. Also involved in 5'-end resection of DNA during double-strand break (DSB) repair by mediating the cleavage of 5'-ssDNA, while the 3'-ssDNA cleavage is prevented by the presence of RPA. Also involved in DNA replication checkpoint independently of Okazaki fragments processing. Possesses different enzymatic activities, such as single-stranded DNA (ssDNA)-dependent ATPase, 5'-3' helicase and endonuclease activities. While the ATPase and endonuclease activities are well-defined and play a key role in Okazaki fragments processing and DSB repair, the 5'-3' DNA helicase activity is subject to debate. According to various reports, the helicase activity is weak and its function remains largely unclear. Helicase activity may promote the motion of DNA2 on the flap, helping the nuclease function (By similarity).</text>
</comment>
<comment type="catalytic activity">
    <reaction>
        <text>ATP + H2O = ADP + phosphate + H(+)</text>
        <dbReference type="Rhea" id="RHEA:13065"/>
        <dbReference type="ChEBI" id="CHEBI:15377"/>
        <dbReference type="ChEBI" id="CHEBI:15378"/>
        <dbReference type="ChEBI" id="CHEBI:30616"/>
        <dbReference type="ChEBI" id="CHEBI:43474"/>
        <dbReference type="ChEBI" id="CHEBI:456216"/>
        <dbReference type="EC" id="3.6.4.12"/>
    </reaction>
</comment>
<comment type="cofactor">
    <cofactor evidence="1">
        <name>[4Fe-4S] cluster</name>
        <dbReference type="ChEBI" id="CHEBI:49883"/>
    </cofactor>
    <text evidence="1">Binds 1 [4Fe-4S] cluster.</text>
</comment>
<comment type="subcellular location">
    <subcellularLocation>
        <location evidence="2">Nucleus</location>
    </subcellularLocation>
    <subcellularLocation>
        <location evidence="2">Mitochondrion</location>
    </subcellularLocation>
</comment>
<comment type="similarity">
    <text evidence="4">Belongs to the DNA2/NAM7 helicase family.</text>
</comment>
<gene>
    <name type="primary">DNA2</name>
    <name type="synonym">DNA2L</name>
    <name type="ORF">RCJMB04_11a16</name>
</gene>